<accession>Q9FD29</accession>
<accession>Q63QL8</accession>
<comment type="function">
    <text evidence="1">This protein binds to 23S rRNA in the presence of protein L20.</text>
</comment>
<comment type="subunit">
    <text evidence="1">Part of the 50S ribosomal subunit. Contacts protein L20.</text>
</comment>
<comment type="similarity">
    <text evidence="1">Belongs to the bacterial ribosomal protein bL21 family.</text>
</comment>
<proteinExistence type="inferred from homology"/>
<name>RL21_BURPS</name>
<dbReference type="EMBL" id="AF292383">
    <property type="protein sequence ID" value="AAG01347.1"/>
    <property type="molecule type" value="Genomic_DNA"/>
</dbReference>
<dbReference type="EMBL" id="BX571965">
    <property type="protein sequence ID" value="CAH37016.1"/>
    <property type="molecule type" value="Genomic_DNA"/>
</dbReference>
<dbReference type="RefSeq" id="WP_004194344.1">
    <property type="nucleotide sequence ID" value="NZ_CP009538.1"/>
</dbReference>
<dbReference type="RefSeq" id="YP_109600.1">
    <property type="nucleotide sequence ID" value="NC_006350.1"/>
</dbReference>
<dbReference type="SMR" id="Q9FD29"/>
<dbReference type="STRING" id="272560.BPSL3005"/>
<dbReference type="GeneID" id="93061605"/>
<dbReference type="KEGG" id="bps:BPSL3005"/>
<dbReference type="PATRIC" id="fig|272560.51.peg.2264"/>
<dbReference type="eggNOG" id="COG0261">
    <property type="taxonomic scope" value="Bacteria"/>
</dbReference>
<dbReference type="PRO" id="PR:Q9FD29"/>
<dbReference type="Proteomes" id="UP000000605">
    <property type="component" value="Chromosome 1"/>
</dbReference>
<dbReference type="GO" id="GO:0005737">
    <property type="term" value="C:cytoplasm"/>
    <property type="evidence" value="ECO:0007669"/>
    <property type="project" value="UniProtKB-ARBA"/>
</dbReference>
<dbReference type="GO" id="GO:1990904">
    <property type="term" value="C:ribonucleoprotein complex"/>
    <property type="evidence" value="ECO:0007669"/>
    <property type="project" value="UniProtKB-KW"/>
</dbReference>
<dbReference type="GO" id="GO:0005840">
    <property type="term" value="C:ribosome"/>
    <property type="evidence" value="ECO:0007669"/>
    <property type="project" value="UniProtKB-KW"/>
</dbReference>
<dbReference type="GO" id="GO:0019843">
    <property type="term" value="F:rRNA binding"/>
    <property type="evidence" value="ECO:0007669"/>
    <property type="project" value="UniProtKB-UniRule"/>
</dbReference>
<dbReference type="GO" id="GO:0003735">
    <property type="term" value="F:structural constituent of ribosome"/>
    <property type="evidence" value="ECO:0007669"/>
    <property type="project" value="InterPro"/>
</dbReference>
<dbReference type="GO" id="GO:0006412">
    <property type="term" value="P:translation"/>
    <property type="evidence" value="ECO:0007669"/>
    <property type="project" value="UniProtKB-UniRule"/>
</dbReference>
<dbReference type="HAMAP" id="MF_01363">
    <property type="entry name" value="Ribosomal_bL21"/>
    <property type="match status" value="1"/>
</dbReference>
<dbReference type="InterPro" id="IPR028909">
    <property type="entry name" value="bL21-like"/>
</dbReference>
<dbReference type="InterPro" id="IPR036164">
    <property type="entry name" value="bL21-like_sf"/>
</dbReference>
<dbReference type="InterPro" id="IPR001787">
    <property type="entry name" value="Ribosomal_bL21"/>
</dbReference>
<dbReference type="InterPro" id="IPR018258">
    <property type="entry name" value="Ribosomal_bL21_CS"/>
</dbReference>
<dbReference type="NCBIfam" id="TIGR00061">
    <property type="entry name" value="L21"/>
    <property type="match status" value="1"/>
</dbReference>
<dbReference type="PANTHER" id="PTHR21349">
    <property type="entry name" value="50S RIBOSOMAL PROTEIN L21"/>
    <property type="match status" value="1"/>
</dbReference>
<dbReference type="PANTHER" id="PTHR21349:SF0">
    <property type="entry name" value="LARGE RIBOSOMAL SUBUNIT PROTEIN BL21M"/>
    <property type="match status" value="1"/>
</dbReference>
<dbReference type="Pfam" id="PF00829">
    <property type="entry name" value="Ribosomal_L21p"/>
    <property type="match status" value="1"/>
</dbReference>
<dbReference type="SUPFAM" id="SSF141091">
    <property type="entry name" value="L21p-like"/>
    <property type="match status" value="1"/>
</dbReference>
<dbReference type="PROSITE" id="PS01169">
    <property type="entry name" value="RIBOSOMAL_L21"/>
    <property type="match status" value="1"/>
</dbReference>
<gene>
    <name evidence="1" type="primary">rplU</name>
    <name type="ordered locus">BPSL3005</name>
</gene>
<reference key="1">
    <citation type="submission" date="2000-08" db="EMBL/GenBank/DDBJ databases">
        <title>Random sequencing of Burkholderia pseudomallei strain G9313 for clinical PCR development.</title>
        <authorList>
            <person name="Steiner B."/>
            <person name="Meyer R."/>
            <person name="Bowen M."/>
            <person name="Morrill W."/>
        </authorList>
    </citation>
    <scope>NUCLEOTIDE SEQUENCE [GENOMIC DNA]</scope>
    <source>
        <strain>G9313</strain>
    </source>
</reference>
<reference key="2">
    <citation type="journal article" date="2004" name="Proc. Natl. Acad. Sci. U.S.A.">
        <title>Genomic plasticity of the causative agent of melioidosis, Burkholderia pseudomallei.</title>
        <authorList>
            <person name="Holden M.T.G."/>
            <person name="Titball R.W."/>
            <person name="Peacock S.J."/>
            <person name="Cerdeno-Tarraga A.-M."/>
            <person name="Atkins T."/>
            <person name="Crossman L.C."/>
            <person name="Pitt T."/>
            <person name="Churcher C."/>
            <person name="Mungall K.L."/>
            <person name="Bentley S.D."/>
            <person name="Sebaihia M."/>
            <person name="Thomson N.R."/>
            <person name="Bason N."/>
            <person name="Beacham I.R."/>
            <person name="Brooks K."/>
            <person name="Brown K.A."/>
            <person name="Brown N.F."/>
            <person name="Challis G.L."/>
            <person name="Cherevach I."/>
            <person name="Chillingworth T."/>
            <person name="Cronin A."/>
            <person name="Crossett B."/>
            <person name="Davis P."/>
            <person name="DeShazer D."/>
            <person name="Feltwell T."/>
            <person name="Fraser A."/>
            <person name="Hance Z."/>
            <person name="Hauser H."/>
            <person name="Holroyd S."/>
            <person name="Jagels K."/>
            <person name="Keith K.E."/>
            <person name="Maddison M."/>
            <person name="Moule S."/>
            <person name="Price C."/>
            <person name="Quail M.A."/>
            <person name="Rabbinowitsch E."/>
            <person name="Rutherford K."/>
            <person name="Sanders M."/>
            <person name="Simmonds M."/>
            <person name="Songsivilai S."/>
            <person name="Stevens K."/>
            <person name="Tumapa S."/>
            <person name="Vesaratchavest M."/>
            <person name="Whitehead S."/>
            <person name="Yeats C."/>
            <person name="Barrell B.G."/>
            <person name="Oyston P.C.F."/>
            <person name="Parkhill J."/>
        </authorList>
    </citation>
    <scope>NUCLEOTIDE SEQUENCE [LARGE SCALE GENOMIC DNA]</scope>
    <source>
        <strain>K96243</strain>
    </source>
</reference>
<feature type="chain" id="PRO_0000269295" description="Large ribosomal subunit protein bL21">
    <location>
        <begin position="1"/>
        <end position="103"/>
    </location>
</feature>
<organism>
    <name type="scientific">Burkholderia pseudomallei (strain K96243)</name>
    <dbReference type="NCBI Taxonomy" id="272560"/>
    <lineage>
        <taxon>Bacteria</taxon>
        <taxon>Pseudomonadati</taxon>
        <taxon>Pseudomonadota</taxon>
        <taxon>Betaproteobacteria</taxon>
        <taxon>Burkholderiales</taxon>
        <taxon>Burkholderiaceae</taxon>
        <taxon>Burkholderia</taxon>
        <taxon>pseudomallei group</taxon>
    </lineage>
</organism>
<protein>
    <recommendedName>
        <fullName evidence="1">Large ribosomal subunit protein bL21</fullName>
    </recommendedName>
    <alternativeName>
        <fullName evidence="2">50S ribosomal protein L21</fullName>
    </alternativeName>
</protein>
<evidence type="ECO:0000255" key="1">
    <source>
        <dbReference type="HAMAP-Rule" id="MF_01363"/>
    </source>
</evidence>
<evidence type="ECO:0000305" key="2"/>
<keyword id="KW-1185">Reference proteome</keyword>
<keyword id="KW-0687">Ribonucleoprotein</keyword>
<keyword id="KW-0689">Ribosomal protein</keyword>
<keyword id="KW-0694">RNA-binding</keyword>
<keyword id="KW-0699">rRNA-binding</keyword>
<sequence length="103" mass="11356">MYAVIKTGGKQYKVAVGEKLKVEQIPADIDAEITLDQVLAVGEGESIQFGTPLVSGASVKATVVSHGRHAKVTIFKMRRRKHYQKHGGHRQNYTELRIDAINA</sequence>